<feature type="transit peptide" description="Chloroplast" evidence="1">
    <location>
        <begin position="1"/>
        <end position="22"/>
    </location>
</feature>
<feature type="chain" id="PRO_0000420527" description="Protein PALE CRESS, chloroplastic">
    <location>
        <begin position="23"/>
        <end position="313"/>
    </location>
</feature>
<feature type="splice variant" id="VSP_044528" description="In isoform 2." evidence="6">
    <location>
        <begin position="62"/>
        <end position="67"/>
    </location>
</feature>
<evidence type="ECO:0000255" key="1"/>
<evidence type="ECO:0000269" key="2">
    <source>
    </source>
</evidence>
<evidence type="ECO:0000269" key="3">
    <source>
    </source>
</evidence>
<evidence type="ECO:0000269" key="4">
    <source>
    </source>
</evidence>
<evidence type="ECO:0000269" key="5">
    <source>
    </source>
</evidence>
<evidence type="ECO:0000305" key="6"/>
<sequence>MAATSLVLTCASPLFSSPRVISATKKLTTELSISTAKFRRRCSGNNDEVLLEGMPPEYYDDEWQARQREKTKELRRMQREEEEEEERKIEEYREIGTRLKEFPEQDLRKARKLVSSFIRAAEEVEERIEEAAEKGELDELVLMIIWNRLDLARRDDEKDAIRSLDLLYRRVETEILKRQASPAMKLLNDLLNMHDGFEDDAWLKDCRKRMAETFPREDPFSILMPPGFDIDMHQGQLRPPIETETDNTLLRVDFVREVDALLQEVRIEEDATTGSKGEGLDPEAIALKFKQQEKQRTIRQIEAILDLALNLKW</sequence>
<comment type="function">
    <text evidence="3 4 5">Required for the differentiation of chloroplast from proplastids or etioplasts, probably by modulating some chloroplast-encoded genes expression and mRNA maturation. Involved in leaf-cells differentiation.</text>
</comment>
<comment type="subcellular location">
    <subcellularLocation>
        <location evidence="2 5">Plastid</location>
        <location evidence="2 5">Chloroplast</location>
    </subcellularLocation>
    <subcellularLocation>
        <location evidence="2">Plastid</location>
        <location evidence="2">Chromoplast</location>
    </subcellularLocation>
    <subcellularLocation>
        <location evidence="2">Plastid</location>
        <location evidence="2">Etioplast</location>
    </subcellularLocation>
    <subcellularLocation>
        <location evidence="2">Plastid</location>
        <location evidence="2">Amyloplast</location>
    </subcellularLocation>
    <text evidence="2">Present in thin tubular projections emanating from plastids and often connecting organelles each other.</text>
</comment>
<comment type="alternative products">
    <event type="alternative splicing"/>
    <isoform>
        <id>Q39089-1</id>
        <name>1</name>
        <sequence type="displayed"/>
    </isoform>
    <isoform>
        <id>Q39089-2</id>
        <name>2</name>
        <sequence type="described" ref="VSP_044528"/>
    </isoform>
    <text>Additional isoforms seem to exist.</text>
</comment>
<comment type="tissue specificity">
    <text evidence="2 4">Expressed in green tissues, including leaves. Accumulates in chloroplasts of mature stomatal guard cells.</text>
</comment>
<comment type="induction">
    <text evidence="3">By light.</text>
</comment>
<comment type="disruption phenotype">
    <text evidence="3 4 5">Impaired chloroplast development from proplastids or etioplasts leading to reduced chlorophylls and carotenoids accumulation. Reduced accumulation and maturation of some chloroplast-encoded transcripts. Leaves are pale with enlarged intercellular spaces, and loss of differentiation between palisade and mesophyll layers. Partially restored by cytokinin treatment.</text>
</comment>
<comment type="sequence caution" evidence="6">
    <conflict type="frameshift">
        <sequence resource="EMBL-CDS" id="AAA21761"/>
    </conflict>
</comment>
<proteinExistence type="evidence at transcript level"/>
<keyword id="KW-0025">Alternative splicing</keyword>
<keyword id="KW-0035">Amyloplast</keyword>
<keyword id="KW-0150">Chloroplast</keyword>
<keyword id="KW-0217">Developmental protein</keyword>
<keyword id="KW-0507">mRNA processing</keyword>
<keyword id="KW-0934">Plastid</keyword>
<keyword id="KW-1185">Reference proteome</keyword>
<keyword id="KW-0804">Transcription</keyword>
<keyword id="KW-0805">Transcription regulation</keyword>
<keyword id="KW-0809">Transit peptide</keyword>
<dbReference type="EMBL" id="L35241">
    <property type="protein sequence ID" value="AAA21761.1"/>
    <property type="status" value="ALT_FRAME"/>
    <property type="molecule type" value="mRNA"/>
</dbReference>
<dbReference type="EMBL" id="X96480">
    <property type="protein sequence ID" value="CAA65334.1"/>
    <property type="molecule type" value="Genomic_DNA"/>
</dbReference>
<dbReference type="EMBL" id="X96482">
    <property type="protein sequence ID" value="CAA65337.1"/>
    <property type="molecule type" value="mRNA"/>
</dbReference>
<dbReference type="EMBL" id="AC007166">
    <property type="status" value="NOT_ANNOTATED_CDS"/>
    <property type="molecule type" value="Genomic_DNA"/>
</dbReference>
<dbReference type="EMBL" id="CP002685">
    <property type="protein sequence ID" value="AEC10939.1"/>
    <property type="molecule type" value="Genomic_DNA"/>
</dbReference>
<dbReference type="EMBL" id="CP002685">
    <property type="protein sequence ID" value="AEC10940.1"/>
    <property type="molecule type" value="Genomic_DNA"/>
</dbReference>
<dbReference type="EMBL" id="AK117768">
    <property type="protein sequence ID" value="BAC42415.1"/>
    <property type="molecule type" value="mRNA"/>
</dbReference>
<dbReference type="EMBL" id="BT005304">
    <property type="protein sequence ID" value="AAO63368.1"/>
    <property type="molecule type" value="mRNA"/>
</dbReference>
<dbReference type="EMBL" id="AY086817">
    <property type="protein sequence ID" value="AAM63866.1"/>
    <property type="molecule type" value="mRNA"/>
</dbReference>
<dbReference type="PIR" id="F84923">
    <property type="entry name" value="F84923"/>
</dbReference>
<dbReference type="RefSeq" id="NP_001078079.1">
    <molecule id="Q39089-2"/>
    <property type="nucleotide sequence ID" value="NM_001084610.1"/>
</dbReference>
<dbReference type="RefSeq" id="NP_182332.1">
    <molecule id="Q39089-1"/>
    <property type="nucleotide sequence ID" value="NM_130379.2"/>
</dbReference>
<dbReference type="SMR" id="Q39089"/>
<dbReference type="BioGRID" id="4759">
    <property type="interactions" value="1"/>
</dbReference>
<dbReference type="FunCoup" id="Q39089">
    <property type="interactions" value="862"/>
</dbReference>
<dbReference type="IntAct" id="Q39089">
    <property type="interactions" value="1"/>
</dbReference>
<dbReference type="STRING" id="3702.Q39089"/>
<dbReference type="iPTMnet" id="Q39089"/>
<dbReference type="PaxDb" id="3702-AT2G48120.1"/>
<dbReference type="ProteomicsDB" id="248628">
    <molecule id="Q39089-1"/>
</dbReference>
<dbReference type="EnsemblPlants" id="AT2G48120.1">
    <molecule id="Q39089-1"/>
    <property type="protein sequence ID" value="AT2G48120.1"/>
    <property type="gene ID" value="AT2G48120"/>
</dbReference>
<dbReference type="EnsemblPlants" id="AT2G48120.2">
    <molecule id="Q39089-2"/>
    <property type="protein sequence ID" value="AT2G48120.2"/>
    <property type="gene ID" value="AT2G48120"/>
</dbReference>
<dbReference type="GeneID" id="819424"/>
<dbReference type="Gramene" id="AT2G48120.1">
    <molecule id="Q39089-1"/>
    <property type="protein sequence ID" value="AT2G48120.1"/>
    <property type="gene ID" value="AT2G48120"/>
</dbReference>
<dbReference type="Gramene" id="AT2G48120.2">
    <molecule id="Q39089-2"/>
    <property type="protein sequence ID" value="AT2G48120.2"/>
    <property type="gene ID" value="AT2G48120"/>
</dbReference>
<dbReference type="KEGG" id="ath:AT2G48120"/>
<dbReference type="Araport" id="AT2G48120"/>
<dbReference type="TAIR" id="AT2G48120">
    <property type="gene designation" value="PAC"/>
</dbReference>
<dbReference type="eggNOG" id="ENOG502QVUP">
    <property type="taxonomic scope" value="Eukaryota"/>
</dbReference>
<dbReference type="HOGENOM" id="CLU_071161_0_0_1"/>
<dbReference type="InParanoid" id="Q39089"/>
<dbReference type="OMA" id="NMHDGFN"/>
<dbReference type="OrthoDB" id="1933879at2759"/>
<dbReference type="PhylomeDB" id="Q39089"/>
<dbReference type="PRO" id="PR:Q39089"/>
<dbReference type="Proteomes" id="UP000006548">
    <property type="component" value="Chromosome 2"/>
</dbReference>
<dbReference type="ExpressionAtlas" id="Q39089">
    <property type="expression patterns" value="baseline and differential"/>
</dbReference>
<dbReference type="GO" id="GO:0009501">
    <property type="term" value="C:amyloplast"/>
    <property type="evidence" value="ECO:0000314"/>
    <property type="project" value="TAIR"/>
</dbReference>
<dbReference type="GO" id="GO:0009507">
    <property type="term" value="C:chloroplast"/>
    <property type="evidence" value="ECO:0000314"/>
    <property type="project" value="TAIR"/>
</dbReference>
<dbReference type="GO" id="GO:0042644">
    <property type="term" value="C:chloroplast nucleoid"/>
    <property type="evidence" value="ECO:0000314"/>
    <property type="project" value="TAIR"/>
</dbReference>
<dbReference type="GO" id="GO:0009570">
    <property type="term" value="C:chloroplast stroma"/>
    <property type="evidence" value="ECO:0000314"/>
    <property type="project" value="TAIR"/>
</dbReference>
<dbReference type="GO" id="GO:0009509">
    <property type="term" value="C:chromoplast"/>
    <property type="evidence" value="ECO:0000314"/>
    <property type="project" value="TAIR"/>
</dbReference>
<dbReference type="GO" id="GO:0009513">
    <property type="term" value="C:etioplast"/>
    <property type="evidence" value="ECO:0000314"/>
    <property type="project" value="TAIR"/>
</dbReference>
<dbReference type="GO" id="GO:0009537">
    <property type="term" value="C:proplastid"/>
    <property type="evidence" value="ECO:0000314"/>
    <property type="project" value="TAIR"/>
</dbReference>
<dbReference type="GO" id="GO:0003723">
    <property type="term" value="F:RNA binding"/>
    <property type="evidence" value="ECO:0000314"/>
    <property type="project" value="TAIR"/>
</dbReference>
<dbReference type="GO" id="GO:0019843">
    <property type="term" value="F:rRNA binding"/>
    <property type="evidence" value="ECO:0000314"/>
    <property type="project" value="TAIR"/>
</dbReference>
<dbReference type="GO" id="GO:0071482">
    <property type="term" value="P:cellular response to light stimulus"/>
    <property type="evidence" value="ECO:0000270"/>
    <property type="project" value="UniProtKB"/>
</dbReference>
<dbReference type="GO" id="GO:0010239">
    <property type="term" value="P:chloroplast mRNA processing"/>
    <property type="evidence" value="ECO:0000315"/>
    <property type="project" value="TAIR"/>
</dbReference>
<dbReference type="GO" id="GO:0009658">
    <property type="term" value="P:chloroplast organization"/>
    <property type="evidence" value="ECO:0000315"/>
    <property type="project" value="TAIR"/>
</dbReference>
<dbReference type="GO" id="GO:0009965">
    <property type="term" value="P:leaf morphogenesis"/>
    <property type="evidence" value="ECO:0000315"/>
    <property type="project" value="TAIR"/>
</dbReference>
<dbReference type="GO" id="GO:0042254">
    <property type="term" value="P:ribosome biogenesis"/>
    <property type="evidence" value="ECO:0000315"/>
    <property type="project" value="TAIR"/>
</dbReference>
<dbReference type="GO" id="GO:0016070">
    <property type="term" value="P:RNA metabolic process"/>
    <property type="evidence" value="ECO:0000315"/>
    <property type="project" value="TAIR"/>
</dbReference>
<dbReference type="InterPro" id="IPR034563">
    <property type="entry name" value="PALE_CRESS"/>
</dbReference>
<dbReference type="PANTHER" id="PTHR37219">
    <property type="entry name" value="PROTEIN PALE CRESS, CHLOROPLASTIC"/>
    <property type="match status" value="1"/>
</dbReference>
<dbReference type="PANTHER" id="PTHR37219:SF1">
    <property type="entry name" value="PROTEIN PALE CRESS, CHLOROPLASTIC"/>
    <property type="match status" value="1"/>
</dbReference>
<protein>
    <recommendedName>
        <fullName>Protein PALE CRESS, chloroplastic</fullName>
    </recommendedName>
</protein>
<accession>Q39089</accession>
<accession>A8MQP8</accession>
<accession>Q39175</accession>
<accession>Q7DLY1</accession>
<reference key="1">
    <citation type="journal article" date="1994" name="Plant Cell">
        <title>Control of leaf and chloroplast development by the Arabidopsis gene pale cress.</title>
        <authorList>
            <person name="Reiter R.S."/>
            <person name="Coomber S.A."/>
            <person name="Bourett T.M."/>
            <person name="Bartley G.E."/>
            <person name="Scolnik P.A."/>
        </authorList>
    </citation>
    <scope>NUCLEOTIDE SEQUENCE [MRNA] (ISOFORM 1)</scope>
    <scope>FUNCTION</scope>
    <scope>DISRUPTION PHENOTYPE</scope>
    <scope>INDUCTION BY LIGHT</scope>
    <scope>ALTERNATIVE SPLICING</scope>
    <source>
        <strain>cv. Wassilewskija</strain>
    </source>
</reference>
<reference key="2">
    <citation type="journal article" date="1996" name="Mol. Gen. Genet.">
        <title>Characterisation of a new allele of pale cress and its role in greening in Arabidopsis thaliana.</title>
        <authorList>
            <person name="Grevelding C."/>
            <person name="Suter-Crazzolara C."/>
            <person name="Menges A."/>
            <person name="von Kempner E."/>
            <person name="Masterson R."/>
            <person name="Schell J."/>
            <person name="Reiss B."/>
        </authorList>
    </citation>
    <scope>NUCLEOTIDE SEQUENCE [GENOMIC DNA / MRNA] (ISOFORM 1)</scope>
    <scope>FUNCTION</scope>
    <scope>DISRUPTION PHENOTYPE</scope>
    <scope>TISSUE SPECIFICITY</scope>
    <source>
        <strain>cv. Columbia</strain>
    </source>
</reference>
<reference key="3">
    <citation type="journal article" date="1999" name="Nature">
        <title>Sequence and analysis of chromosome 2 of the plant Arabidopsis thaliana.</title>
        <authorList>
            <person name="Lin X."/>
            <person name="Kaul S."/>
            <person name="Rounsley S.D."/>
            <person name="Shea T.P."/>
            <person name="Benito M.-I."/>
            <person name="Town C.D."/>
            <person name="Fujii C.Y."/>
            <person name="Mason T.M."/>
            <person name="Bowman C.L."/>
            <person name="Barnstead M.E."/>
            <person name="Feldblyum T.V."/>
            <person name="Buell C.R."/>
            <person name="Ketchum K.A."/>
            <person name="Lee J.J."/>
            <person name="Ronning C.M."/>
            <person name="Koo H.L."/>
            <person name="Moffat K.S."/>
            <person name="Cronin L.A."/>
            <person name="Shen M."/>
            <person name="Pai G."/>
            <person name="Van Aken S."/>
            <person name="Umayam L."/>
            <person name="Tallon L.J."/>
            <person name="Gill J.E."/>
            <person name="Adams M.D."/>
            <person name="Carrera A.J."/>
            <person name="Creasy T.H."/>
            <person name="Goodman H.M."/>
            <person name="Somerville C.R."/>
            <person name="Copenhaver G.P."/>
            <person name="Preuss D."/>
            <person name="Nierman W.C."/>
            <person name="White O."/>
            <person name="Eisen J.A."/>
            <person name="Salzberg S.L."/>
            <person name="Fraser C.M."/>
            <person name="Venter J.C."/>
        </authorList>
    </citation>
    <scope>NUCLEOTIDE SEQUENCE [LARGE SCALE GENOMIC DNA]</scope>
    <source>
        <strain>cv. Columbia</strain>
    </source>
</reference>
<reference key="4">
    <citation type="journal article" date="2017" name="Plant J.">
        <title>Araport11: a complete reannotation of the Arabidopsis thaliana reference genome.</title>
        <authorList>
            <person name="Cheng C.Y."/>
            <person name="Krishnakumar V."/>
            <person name="Chan A.P."/>
            <person name="Thibaud-Nissen F."/>
            <person name="Schobel S."/>
            <person name="Town C.D."/>
        </authorList>
    </citation>
    <scope>GENOME REANNOTATION</scope>
    <source>
        <strain>cv. Columbia</strain>
    </source>
</reference>
<reference key="5">
    <citation type="journal article" date="2002" name="Science">
        <title>Functional annotation of a full-length Arabidopsis cDNA collection.</title>
        <authorList>
            <person name="Seki M."/>
            <person name="Narusaka M."/>
            <person name="Kamiya A."/>
            <person name="Ishida J."/>
            <person name="Satou M."/>
            <person name="Sakurai T."/>
            <person name="Nakajima M."/>
            <person name="Enju A."/>
            <person name="Akiyama K."/>
            <person name="Oono Y."/>
            <person name="Muramatsu M."/>
            <person name="Hayashizaki Y."/>
            <person name="Kawai J."/>
            <person name="Carninci P."/>
            <person name="Itoh M."/>
            <person name="Ishii Y."/>
            <person name="Arakawa T."/>
            <person name="Shibata K."/>
            <person name="Shinagawa A."/>
            <person name="Shinozaki K."/>
        </authorList>
    </citation>
    <scope>NUCLEOTIDE SEQUENCE [LARGE SCALE MRNA] (ISOFORM 1)</scope>
    <source>
        <strain>cv. Columbia</strain>
    </source>
</reference>
<reference key="6">
    <citation type="journal article" date="2003" name="Science">
        <title>Empirical analysis of transcriptional activity in the Arabidopsis genome.</title>
        <authorList>
            <person name="Yamada K."/>
            <person name="Lim J."/>
            <person name="Dale J.M."/>
            <person name="Chen H."/>
            <person name="Shinn P."/>
            <person name="Palm C.J."/>
            <person name="Southwick A.M."/>
            <person name="Wu H.C."/>
            <person name="Kim C.J."/>
            <person name="Nguyen M."/>
            <person name="Pham P.K."/>
            <person name="Cheuk R.F."/>
            <person name="Karlin-Newmann G."/>
            <person name="Liu S.X."/>
            <person name="Lam B."/>
            <person name="Sakano H."/>
            <person name="Wu T."/>
            <person name="Yu G."/>
            <person name="Miranda M."/>
            <person name="Quach H.L."/>
            <person name="Tripp M."/>
            <person name="Chang C.H."/>
            <person name="Lee J.M."/>
            <person name="Toriumi M.J."/>
            <person name="Chan M.M."/>
            <person name="Tang C.C."/>
            <person name="Onodera C.S."/>
            <person name="Deng J.M."/>
            <person name="Akiyama K."/>
            <person name="Ansari Y."/>
            <person name="Arakawa T."/>
            <person name="Banh J."/>
            <person name="Banno F."/>
            <person name="Bowser L."/>
            <person name="Brooks S.Y."/>
            <person name="Carninci P."/>
            <person name="Chao Q."/>
            <person name="Choy N."/>
            <person name="Enju A."/>
            <person name="Goldsmith A.D."/>
            <person name="Gurjal M."/>
            <person name="Hansen N.F."/>
            <person name="Hayashizaki Y."/>
            <person name="Johnson-Hopson C."/>
            <person name="Hsuan V.W."/>
            <person name="Iida K."/>
            <person name="Karnes M."/>
            <person name="Khan S."/>
            <person name="Koesema E."/>
            <person name="Ishida J."/>
            <person name="Jiang P.X."/>
            <person name="Jones T."/>
            <person name="Kawai J."/>
            <person name="Kamiya A."/>
            <person name="Meyers C."/>
            <person name="Nakajima M."/>
            <person name="Narusaka M."/>
            <person name="Seki M."/>
            <person name="Sakurai T."/>
            <person name="Satou M."/>
            <person name="Tamse R."/>
            <person name="Vaysberg M."/>
            <person name="Wallender E.K."/>
            <person name="Wong C."/>
            <person name="Yamamura Y."/>
            <person name="Yuan S."/>
            <person name="Shinozaki K."/>
            <person name="Davis R.W."/>
            <person name="Theologis A."/>
            <person name="Ecker J.R."/>
        </authorList>
    </citation>
    <scope>NUCLEOTIDE SEQUENCE [LARGE SCALE MRNA] (ISOFORM 1)</scope>
    <source>
        <strain>cv. Columbia</strain>
    </source>
</reference>
<reference key="7">
    <citation type="submission" date="2002-03" db="EMBL/GenBank/DDBJ databases">
        <title>Full-length cDNA from Arabidopsis thaliana.</title>
        <authorList>
            <person name="Brover V.V."/>
            <person name="Troukhan M.E."/>
            <person name="Alexandrov N.A."/>
            <person name="Lu Y.-P."/>
            <person name="Flavell R.B."/>
            <person name="Feldmann K.A."/>
        </authorList>
    </citation>
    <scope>NUCLEOTIDE SEQUENCE [LARGE SCALE MRNA] (ISOFORM 1)</scope>
</reference>
<reference key="8">
    <citation type="journal article" date="1998" name="Mol. Gen. Genet.">
        <title>The PAC protein affects the maturation of specific chloroplast mRNAs in Arabidopsis thaliana.</title>
        <authorList>
            <person name="Meurer J."/>
            <person name="Grevelding C."/>
            <person name="Westhoff P."/>
            <person name="Reiss B."/>
        </authorList>
    </citation>
    <scope>FUNCTION</scope>
    <scope>DISRUPTION PHENOTYPE</scope>
    <scope>SUBCELLULAR LOCATION</scope>
    <source>
        <strain>cv. Columbia</strain>
    </source>
</reference>
<reference key="9">
    <citation type="journal article" date="1999" name="Eur. J. Cell Biol.">
        <title>Characterization of the activity of a plastid-targeted green fluorescent protein in Arabidopsis.</title>
        <authorList>
            <person name="Tirlapur U.K."/>
            <person name="Dahse I."/>
            <person name="Reiss B."/>
            <person name="Meurer J."/>
            <person name="Oelmueller R."/>
        </authorList>
    </citation>
    <scope>SUBCELLULAR LOCATION</scope>
    <scope>TISSUE SPECIFICITY</scope>
</reference>
<organism>
    <name type="scientific">Arabidopsis thaliana</name>
    <name type="common">Mouse-ear cress</name>
    <dbReference type="NCBI Taxonomy" id="3702"/>
    <lineage>
        <taxon>Eukaryota</taxon>
        <taxon>Viridiplantae</taxon>
        <taxon>Streptophyta</taxon>
        <taxon>Embryophyta</taxon>
        <taxon>Tracheophyta</taxon>
        <taxon>Spermatophyta</taxon>
        <taxon>Magnoliopsida</taxon>
        <taxon>eudicotyledons</taxon>
        <taxon>Gunneridae</taxon>
        <taxon>Pentapetalae</taxon>
        <taxon>rosids</taxon>
        <taxon>malvids</taxon>
        <taxon>Brassicales</taxon>
        <taxon>Brassicaceae</taxon>
        <taxon>Camelineae</taxon>
        <taxon>Arabidopsis</taxon>
    </lineage>
</organism>
<gene>
    <name type="primary">PAC</name>
    <name type="synonym">t9j23</name>
    <name type="ordered locus">At2g48120</name>
    <name type="ORF">F11L15.2</name>
</gene>
<name>PAC_ARATH</name>